<name>LUXD_SHEWM</name>
<comment type="function">
    <text evidence="1">Acyl transferase is part of the fatty acid reductase system required for aldehyde biosynthesis; it produces fatty acids for the luminescent reaction.</text>
</comment>
<comment type="pathway">
    <text evidence="1">Lipid metabolism; fatty acid reduction for biolumincescence.</text>
</comment>
<comment type="similarity">
    <text evidence="1">Belongs to the LuxD family.</text>
</comment>
<dbReference type="EC" id="2.3.1.-" evidence="1"/>
<dbReference type="EMBL" id="CP000961">
    <property type="protein sequence ID" value="ACA87896.1"/>
    <property type="molecule type" value="Genomic_DNA"/>
</dbReference>
<dbReference type="RefSeq" id="WP_012326229.1">
    <property type="nucleotide sequence ID" value="NC_010506.1"/>
</dbReference>
<dbReference type="SMR" id="B1KD61"/>
<dbReference type="STRING" id="392500.Swoo_3634"/>
<dbReference type="ESTHER" id="shewm-luxd">
    <property type="family name" value="Thioesterase_acyl-transferase"/>
</dbReference>
<dbReference type="KEGG" id="swd:Swoo_3634"/>
<dbReference type="eggNOG" id="COG1073">
    <property type="taxonomic scope" value="Bacteria"/>
</dbReference>
<dbReference type="HOGENOM" id="CLU_882365_0_0_6"/>
<dbReference type="UniPathway" id="UPA00569"/>
<dbReference type="Proteomes" id="UP000002168">
    <property type="component" value="Chromosome"/>
</dbReference>
<dbReference type="GO" id="GO:0016747">
    <property type="term" value="F:acyltransferase activity, transferring groups other than amino-acyl groups"/>
    <property type="evidence" value="ECO:0007669"/>
    <property type="project" value="UniProtKB-UniRule"/>
</dbReference>
<dbReference type="GO" id="GO:0008218">
    <property type="term" value="P:bioluminescence"/>
    <property type="evidence" value="ECO:0007669"/>
    <property type="project" value="UniProtKB-UniRule"/>
</dbReference>
<dbReference type="GO" id="GO:0006631">
    <property type="term" value="P:fatty acid metabolic process"/>
    <property type="evidence" value="ECO:0007669"/>
    <property type="project" value="InterPro"/>
</dbReference>
<dbReference type="Gene3D" id="3.40.50.1820">
    <property type="entry name" value="alpha/beta hydrolase"/>
    <property type="match status" value="1"/>
</dbReference>
<dbReference type="HAMAP" id="MF_00774">
    <property type="entry name" value="LuxD"/>
    <property type="match status" value="1"/>
</dbReference>
<dbReference type="InterPro" id="IPR029058">
    <property type="entry name" value="AB_hydrolase_fold"/>
</dbReference>
<dbReference type="InterPro" id="IPR003157">
    <property type="entry name" value="LuxD"/>
</dbReference>
<dbReference type="NCBIfam" id="NF010127">
    <property type="entry name" value="PRK13604.1"/>
    <property type="match status" value="1"/>
</dbReference>
<dbReference type="Pfam" id="PF02273">
    <property type="entry name" value="Acyl_transf_2"/>
    <property type="match status" value="1"/>
</dbReference>
<dbReference type="PIRSF" id="PIRSF009416">
    <property type="entry name" value="LuxD"/>
    <property type="match status" value="1"/>
</dbReference>
<dbReference type="SUPFAM" id="SSF53474">
    <property type="entry name" value="alpha/beta-Hydrolases"/>
    <property type="match status" value="1"/>
</dbReference>
<feature type="chain" id="PRO_1000200689" description="Acyl transferase">
    <location>
        <begin position="1"/>
        <end position="305"/>
    </location>
</feature>
<feature type="active site" description="Charge relay system" evidence="1">
    <location>
        <position position="116"/>
    </location>
</feature>
<feature type="active site" description="Charge relay system" evidence="1">
    <location>
        <position position="213"/>
    </location>
</feature>
<feature type="active site" description="Charge relay system" evidence="1">
    <location>
        <position position="243"/>
    </location>
</feature>
<keyword id="KW-0012">Acyltransferase</keyword>
<keyword id="KW-0455">Luminescence</keyword>
<keyword id="KW-1185">Reference proteome</keyword>
<keyword id="KW-0808">Transferase</keyword>
<gene>
    <name evidence="1" type="primary">luxD</name>
    <name type="ordered locus">Swoo_3634</name>
</gene>
<sequence>MTNEDTFSTIDHAINLETGKTIRVWETFPKDNSLVKNNTILIASGFARRMDHFAGLAEYLSSNGFHVIRYDSLHHVGLSSGNINEFSMTIGKKSLLTVIEWLKRRNINKFGLIAASLSARIAYDVANEIDLSFLVTAVGVVNLRDTLERALKYDYLQLPIEELPEDLDFEGHNLGSEIFVTDCFKHQWDTFNSTKNKMKDLNIPFIAFTANDDSWVKQNEVLELIESLNPEKCQLYSLIGSSHDLGENLVVLRNFYQSVTKAAIALDKGSLNLDINIIEPKFEDITSVTVKERRLKHNIESLELA</sequence>
<proteinExistence type="inferred from homology"/>
<evidence type="ECO:0000255" key="1">
    <source>
        <dbReference type="HAMAP-Rule" id="MF_00774"/>
    </source>
</evidence>
<organism>
    <name type="scientific">Shewanella woodyi (strain ATCC 51908 / MS32)</name>
    <dbReference type="NCBI Taxonomy" id="392500"/>
    <lineage>
        <taxon>Bacteria</taxon>
        <taxon>Pseudomonadati</taxon>
        <taxon>Pseudomonadota</taxon>
        <taxon>Gammaproteobacteria</taxon>
        <taxon>Alteromonadales</taxon>
        <taxon>Shewanellaceae</taxon>
        <taxon>Shewanella</taxon>
    </lineage>
</organism>
<protein>
    <recommendedName>
        <fullName evidence="1">Acyl transferase</fullName>
        <shortName evidence="1">ACT</shortName>
        <ecNumber evidence="1">2.3.1.-</ecNumber>
    </recommendedName>
    <alternativeName>
        <fullName evidence="1">C14ACP-TE</fullName>
    </alternativeName>
    <alternativeName>
        <fullName evidence="1">Myristoyl-ACP-specific thioesterase</fullName>
    </alternativeName>
</protein>
<accession>B1KD61</accession>
<reference key="1">
    <citation type="submission" date="2008-02" db="EMBL/GenBank/DDBJ databases">
        <title>Complete sequence of Shewanella woodyi ATCC 51908.</title>
        <authorList>
            <consortium name="US DOE Joint Genome Institute"/>
            <person name="Copeland A."/>
            <person name="Lucas S."/>
            <person name="Lapidus A."/>
            <person name="Glavina del Rio T."/>
            <person name="Dalin E."/>
            <person name="Tice H."/>
            <person name="Bruce D."/>
            <person name="Goodwin L."/>
            <person name="Pitluck S."/>
            <person name="Sims D."/>
            <person name="Brettin T."/>
            <person name="Detter J.C."/>
            <person name="Han C."/>
            <person name="Kuske C.R."/>
            <person name="Schmutz J."/>
            <person name="Larimer F."/>
            <person name="Land M."/>
            <person name="Hauser L."/>
            <person name="Kyrpides N."/>
            <person name="Lykidis A."/>
            <person name="Zhao J.-S."/>
            <person name="Richardson P."/>
        </authorList>
    </citation>
    <scope>NUCLEOTIDE SEQUENCE [LARGE SCALE GENOMIC DNA]</scope>
    <source>
        <strain>ATCC 51908 / MS32</strain>
    </source>
</reference>